<accession>C9DGK1</accession>
<keyword id="KW-0945">Host-virus interaction</keyword>
<keyword id="KW-1090">Inhibition of host innate immune response by virus</keyword>
<keyword id="KW-0489">Methyltransferase</keyword>
<keyword id="KW-1185">Reference proteome</keyword>
<keyword id="KW-1258">Restriction-modification system evasion by virus</keyword>
<keyword id="KW-0808">Transferase</keyword>
<keyword id="KW-0899">Viral immunoevasion</keyword>
<protein>
    <recommendedName>
        <fullName evidence="4">Deoxyuridylate hydroxymethyltransferase</fullName>
        <shortName evidence="4">Deoxyuridylate hydroxymethylase</shortName>
        <ecNumber evidence="1">2.1.2.-</ecNumber>
    </recommendedName>
    <alternativeName>
        <fullName evidence="3">dUMP hydroxymethylase</fullName>
        <shortName evidence="4">dUMP-HMase</shortName>
    </alternativeName>
</protein>
<organismHost>
    <name type="scientific">Delftia acidovorans</name>
    <name type="common">Pseudomonas acidovorans</name>
    <name type="synonym">Comamonas acidovorans</name>
    <dbReference type="NCBI Taxonomy" id="80866"/>
</organismHost>
<gene>
    <name evidence="7" type="primary">230</name>
</gene>
<organism>
    <name type="scientific">Delftia phage PhiW-14</name>
    <name type="common">Deftia acidovorans bacteriophage phiW-14</name>
    <dbReference type="NCBI Taxonomy" id="665032"/>
    <lineage>
        <taxon>Viruses</taxon>
        <taxon>Duplodnaviria</taxon>
        <taxon>Heunggongvirae</taxon>
        <taxon>Uroviricota</taxon>
        <taxon>Caudoviricetes</taxon>
        <taxon>Ionavirus</taxon>
        <taxon>Ionavirus W14</taxon>
    </lineage>
</organism>
<proteinExistence type="evidence at protein level"/>
<name>DUHM_BPW14</name>
<sequence>MNPFNIISDTGVSAAVYAGLSRAKCTGQYKECRNGGSTFLRNVKFHITDPRNRNLTLNGRKSNIFQMVAETFWVMSGSGNIKEFLEFFLPRAPQYSDDGINWHGAYGPRMYAHNQLQSAIDLLIKDKDTRRAYVMIADPTLDSAPAIEAAYGVGHSPKDVPCNREIHINIIEDKLCMKVIQRSGDMLFGTGSINPFEFTFLQELLSEATGYALGDYQWDVTDAHYYKAFEDQVNDVLRSEQTFWPNDGKPLGTRFTSATKMQEFFAGVVRVWVKQINRLIDLGDAHYAINDLFADYGVLPEGRLRDYAKMVTFYIAAKQGEIEGDFKALLTNIPTNTDLGQAILTSPFRKFGVVLGD</sequence>
<dbReference type="EC" id="2.1.2.-" evidence="1"/>
<dbReference type="EMBL" id="GQ357915">
    <property type="protein sequence ID" value="ACV50252.1"/>
    <property type="molecule type" value="Genomic_DNA"/>
</dbReference>
<dbReference type="RefSeq" id="YP_003359084.1">
    <property type="nucleotide sequence ID" value="NC_013697.1"/>
</dbReference>
<dbReference type="SMR" id="C9DGK1"/>
<dbReference type="GeneID" id="8684178"/>
<dbReference type="KEGG" id="vg:8684178"/>
<dbReference type="OrthoDB" id="5266at10239"/>
<dbReference type="Proteomes" id="UP000008986">
    <property type="component" value="Genome"/>
</dbReference>
<dbReference type="GO" id="GO:0008168">
    <property type="term" value="F:methyltransferase activity"/>
    <property type="evidence" value="ECO:0007669"/>
    <property type="project" value="UniProtKB-KW"/>
</dbReference>
<dbReference type="GO" id="GO:0032259">
    <property type="term" value="P:methylation"/>
    <property type="evidence" value="ECO:0007669"/>
    <property type="project" value="UniProtKB-KW"/>
</dbReference>
<dbReference type="GO" id="GO:0099018">
    <property type="term" value="P:symbiont-mediated evasion of host restriction-modification system"/>
    <property type="evidence" value="ECO:0007669"/>
    <property type="project" value="UniProtKB-KW"/>
</dbReference>
<dbReference type="GO" id="GO:0052170">
    <property type="term" value="P:symbiont-mediated suppression of host innate immune response"/>
    <property type="evidence" value="ECO:0007669"/>
    <property type="project" value="UniProtKB-KW"/>
</dbReference>
<dbReference type="Gene3D" id="3.30.572.10">
    <property type="entry name" value="Thymidylate synthase/dCMP hydroxymethylase domain"/>
    <property type="match status" value="1"/>
</dbReference>
<dbReference type="InterPro" id="IPR023451">
    <property type="entry name" value="Thymidate_synth/dCMP_Mease_dom"/>
</dbReference>
<dbReference type="InterPro" id="IPR036926">
    <property type="entry name" value="Thymidate_synth/dCMP_Mease_sf"/>
</dbReference>
<dbReference type="Pfam" id="PF00303">
    <property type="entry name" value="Thymidylat_synt"/>
    <property type="match status" value="1"/>
</dbReference>
<dbReference type="SUPFAM" id="SSF55831">
    <property type="entry name" value="Thymidylate synthase/dCMP hydroxymethylase"/>
    <property type="match status" value="1"/>
</dbReference>
<comment type="function">
    <text evidence="5 6">Catalyzes formation of 5-hydroxymethyldeoxyuridylate (5HMdUMP) as a step in the pathway that replaces dTMP by thymidine hypermodifications in the viral genome (Probable). As a final result of the pathway of hypermodification, 5-Nalpha-putrescinylthymidine (Nalpha-PutT) substitutes for about 50% of thymidines in the viral DNA (Probable). These modifications probably prevent degradation of viral genome by the host restriction-modification antiviral defense system (Probable).</text>
</comment>
<comment type="catalytic activity">
    <reaction evidence="1">
        <text>dUMP + (6R)-5,10-methylene-5,6,7,8-tetrahydrofolate + H2O = 5-hydroxymethyl-dUMP + (6S)-5,6,7,8-tetrahydrofolate</text>
        <dbReference type="Rhea" id="RHEA:48424"/>
        <dbReference type="ChEBI" id="CHEBI:15377"/>
        <dbReference type="ChEBI" id="CHEBI:15636"/>
        <dbReference type="ChEBI" id="CHEBI:57453"/>
        <dbReference type="ChEBI" id="CHEBI:90409"/>
        <dbReference type="ChEBI" id="CHEBI:246422"/>
    </reaction>
</comment>
<comment type="induction">
    <text evidence="2">Hydroxymethylase appears immediately after infection.</text>
</comment>
<comment type="similarity">
    <text evidence="4">Belongs to the thymidylate synthase family.</text>
</comment>
<evidence type="ECO:0000269" key="1">
    <source>
    </source>
</evidence>
<evidence type="ECO:0000269" key="2">
    <source>
    </source>
</evidence>
<evidence type="ECO:0000303" key="3">
    <source>
    </source>
</evidence>
<evidence type="ECO:0000305" key="4"/>
<evidence type="ECO:0000305" key="5">
    <source>
    </source>
</evidence>
<evidence type="ECO:0000305" key="6">
    <source>
    </source>
</evidence>
<evidence type="ECO:0000312" key="7">
    <source>
        <dbReference type="EMBL" id="ACV50252.1"/>
    </source>
</evidence>
<reference key="1">
    <citation type="submission" date="2009-07" db="EMBL/GenBank/DDBJ databases">
        <authorList>
            <person name="Kropinski A.M."/>
            <person name="Villegas A."/>
            <person name="Lingohr E.J."/>
        </authorList>
    </citation>
    <scope>NUCLEOTIDE SEQUENCE [LARGE SCALE GENOMIC DNA]</scope>
</reference>
<reference key="2">
    <citation type="journal article" date="1980" name="J. Virol.">
        <title>Bacteriophage phi W-14-infected Pseudomonas acidovorans synthesizes hydroxymethyldeoxyuridine triphosphate.</title>
        <authorList>
            <person name="Neuhard J."/>
            <person name="Maltman K.L."/>
            <person name="Warren R.A."/>
        </authorList>
    </citation>
    <scope>INDUCTION</scope>
    <scope>FUNCTION</scope>
</reference>
<reference key="3">
    <citation type="journal article" date="2021" name="Nucleic Acids Res.">
        <title>Pathways of thymidine hypermodification.</title>
        <authorList>
            <person name="Lee Y.J."/>
            <person name="Dai N."/>
            <person name="Mueller S.I."/>
            <person name="Guan C."/>
            <person name="Parker M.J."/>
            <person name="Fraser M.E."/>
            <person name="Walsh S.E."/>
            <person name="Sridar J."/>
            <person name="Mulholland A."/>
            <person name="Nayak K."/>
            <person name="Sun Z."/>
            <person name="Lin Y.C."/>
            <person name="Comb D.G."/>
            <person name="Marks K."/>
            <person name="Gonzalez R."/>
            <person name="Dowling D.P."/>
            <person name="Bandarian V."/>
            <person name="Saleh L."/>
            <person name="Correa I.R."/>
            <person name="Weigele P.R."/>
        </authorList>
    </citation>
    <scope>FUNCTION</scope>
    <scope>CATALYTIC ACTIVITY</scope>
</reference>
<feature type="chain" id="PRO_0000456264" description="Deoxyuridylate hydroxymethyltransferase">
    <location>
        <begin position="1"/>
        <end position="357"/>
    </location>
</feature>